<keyword id="KW-0025">Alternative splicing</keyword>
<keyword id="KW-0965">Cell junction</keyword>
<keyword id="KW-0175">Coiled coil</keyword>
<keyword id="KW-1185">Reference proteome</keyword>
<keyword id="KW-0796">Tight junction</keyword>
<sequence length="1368" mass="159446">MERDIYGDMADQHIPVGQGVQIRFIGDLKENGKPRGKRSKQDSYGVAVRVQGIDGQPFVVLNSGDKAKSSFGVQIKSQEPYLNASNTSPPNYQNYSSKPRGPSRSISSESELPENPYGSRGYRPSSSHYSSASDEEQKPRGNIRGSDGLSSLPRPLQASRREELRRSQSHSSLLEPDVEESYDYDHHYSERSSTLDTTYSQSSRDSAWSRSSQKKIDNGDYPSLGYRSATSQQSTSVSNKTKKNGLSTSSPSNQSNEDIDTKPLSSVDSLINKFDIKGQVRGRTARRSQALKDERKRSQSLDGRKNYHDTADSREIIVEKQNEVQTMREPVNASNRSFNRQTLERGDISKTRLTKEWLDQDREEPVILKQQRTVQSEFQLKSTPDLLRDQQPDGSDPTREMIFGILREGSLESENTLRKKTSILLEKLPSLQVQPGEDTISLGSQKKELERKVAELQRQLDDEMKQRMKLETSQGRPKAGMQRLEIELEESKEECSRLKELYEKKKNELSAMSQELMEVRMGKEQVETKLRTMEDKLMDSKEELSHLRAKGGTSPDKLALLKELEEVQDELDEVLQIRQKQEELLRQKDRELTALKGALKDEVANHDKDLDRVREQYQNDMQQLRKNMDNVSQDQLSLESERQKINQVVRNLQRELEESSDEISQWKEMFQKNKEELRSTKQELLQMKLEKEESEDELKETRDRFSLLQSELAQVKKGSVDPGEVASVRKELQRVQDQLKQLSVDKQKVEENLQQREREMSALKGTLKEEVSGRDRETVRLREQLQSEVMHVKKENEGLAKESRRIQDQLKQVLLEKQRHEETVHQRERELSVLKGALKDEVSGRDRETEKLRERLEQDALMTKRSYEELVKINKRLESEKTDLERVRQVIENNLQESREENDDLRRKILGLEAQLKETNTFCDDLQRAESRLKDKINKLEAERKRMEDSLGEVADQEQELAFVKRDLESKLDEAQRSLKRLSLEYEELQECYQEEMKQKDHLKKTKNELEEQKRLLDKSMDKLTRELDNMSNESRGSLQLLQTQLEEYREKSRKEIGEAQKQAKEKTAEAERHQFNSSRMQEEVQKLKLALQELQVEKETVELDKQMISQRLQSLEQDIESKKRVQDDRSRQVKVLEDKLKRMEAELDEEKNTVELLTDRVNRSRDQMEQQRAELNQERSRGQDLECDKISLERQNKELKNRLASMEGQQKPSVNVSHLEAKLQEIQERLQLEEREKATLLSTNRKLERKLKELNIQLEDERLQVNDQKDQLNLRVKALKRQVDEAEEEIERLEGLRKKAVREMEEQQEINEQLQTRVKVMEKESKRKPIRPAHDDDLSSDGEFGGPYDPSSITSLLTESNLQTSSC</sequence>
<name>CING_XENLA</name>
<proteinExistence type="evidence at protein level"/>
<evidence type="ECO:0000250" key="1">
    <source>
        <dbReference type="UniProtKB" id="P59242"/>
    </source>
</evidence>
<evidence type="ECO:0000250" key="2">
    <source>
        <dbReference type="UniProtKB" id="Q9P2M7"/>
    </source>
</evidence>
<evidence type="ECO:0000255" key="3"/>
<evidence type="ECO:0000256" key="4">
    <source>
        <dbReference type="SAM" id="MobiDB-lite"/>
    </source>
</evidence>
<evidence type="ECO:0000269" key="5">
    <source>
    </source>
</evidence>
<evidence type="ECO:0000269" key="6">
    <source>
    </source>
</evidence>
<evidence type="ECO:0000269" key="7">
    <source>
    </source>
</evidence>
<evidence type="ECO:0000269" key="8">
    <source>
    </source>
</evidence>
<evidence type="ECO:0000269" key="9">
    <source>
    </source>
</evidence>
<evidence type="ECO:0000303" key="10">
    <source ref="2"/>
</evidence>
<evidence type="ECO:0000305" key="11"/>
<comment type="function">
    <text evidence="7 9">Probably plays a role in the formation and regulation of the tight junction (TJ) paracellular permeability barrier, possibly by linking ZO proteins to the actomyosin cytoskeleton.</text>
</comment>
<comment type="subunit">
    <text evidence="5 6 8">Parallel homodimer (PubMed:10613913). Interacts with TJP1/ZO1 and TJP2/ZO2 in vivo, and TJP3/ZO3, myosin and OCLN in vitro, possibly directly (PubMed:10491082, PubMed:10613913, PubMed:12023291). Acts as an F-actin bundling protein in vitro (PubMed:11682052).</text>
</comment>
<comment type="interaction">
    <interactant intactId="EBI-79525">
        <id>Q9PTD7</id>
    </interactant>
    <interactant intactId="EBI-79607">
        <id>Q9PUN1</id>
        <label>ocln</label>
    </interactant>
    <organismsDiffer>false</organismsDiffer>
    <experiments>2</experiments>
</comment>
<comment type="interaction">
    <interactant intactId="EBI-79525">
        <id>Q9PTD7</id>
    </interactant>
    <interactant intactId="EBI-79619">
        <id>Q91049</id>
        <label>OCLN</label>
    </interactant>
    <organismsDiffer>true</organismsDiffer>
    <experiments>2</experiments>
</comment>
<comment type="subcellular location">
    <subcellularLocation>
        <location evidence="1">Cell junction</location>
        <location evidence="1">Tight junction</location>
    </subcellularLocation>
    <text evidence="1">Localizes to the apical junction complex composed of tight and adherens junctions.</text>
</comment>
<comment type="alternative products">
    <event type="alternative splicing"/>
    <isoform>
        <id>Q9PTD7-1</id>
        <name>1</name>
        <sequence type="displayed"/>
    </isoform>
    <isoform>
        <id>Q9PTD7-2</id>
        <name>2</name>
        <sequence type="described" ref="VSP_037042"/>
    </isoform>
</comment>
<comment type="tissue specificity">
    <text>Localized on the cytoplasmic face of tight junctions of polarized epithelia and some endothelia.</text>
</comment>
<comment type="developmental stage">
    <text>A maternally synthesized protein. Found in the apical cortex in the fertilized egg, where it is associated with cytoskeleton filaments, it is recruited to tight junctions before TJP1/ZO1 and OCLN. Nascent tight junctions are in place by the two-cell stage.</text>
</comment>
<comment type="domain">
    <text>Deletion of the TJP1/ZO1 interaction motif (ZIM) decreases but does not abolish colocalization with TJP1/ZO1.</text>
</comment>
<comment type="similarity">
    <text evidence="11">Belongs to the cingulin family.</text>
</comment>
<comment type="caution">
    <text evidence="11">It is uncertain whether Met-1 or Met-9 is the initiator.</text>
</comment>
<comment type="sequence caution" evidence="11">
    <conflict type="erroneous initiation">
        <sequence resource="EMBL-CDS" id="AAH91650"/>
    </conflict>
    <text>Truncated N-terminus.</text>
</comment>
<protein>
    <recommendedName>
        <fullName evidence="2">Cingulin</fullName>
    </recommendedName>
</protein>
<dbReference type="EMBL" id="AF207901">
    <property type="protein sequence ID" value="AAF20208.1"/>
    <property type="molecule type" value="mRNA"/>
</dbReference>
<dbReference type="EMBL" id="BC091650">
    <property type="protein sequence ID" value="AAH91650.1"/>
    <property type="status" value="ALT_INIT"/>
    <property type="molecule type" value="mRNA"/>
</dbReference>
<dbReference type="RefSeq" id="NP_001081970.1">
    <molecule id="Q9PTD7-1"/>
    <property type="nucleotide sequence ID" value="NM_001088501.1"/>
</dbReference>
<dbReference type="SMR" id="Q9PTD7"/>
<dbReference type="BioGRID" id="99484">
    <property type="interactions" value="6"/>
</dbReference>
<dbReference type="IntAct" id="Q9PTD7">
    <property type="interactions" value="5"/>
</dbReference>
<dbReference type="MINT" id="Q9PTD7"/>
<dbReference type="GeneID" id="398149"/>
<dbReference type="KEGG" id="xla:398149"/>
<dbReference type="AGR" id="Xenbase:XB-GENE-1009260"/>
<dbReference type="CTD" id="398149"/>
<dbReference type="Xenbase" id="XB-GENE-1009260">
    <property type="gene designation" value="cgn.L"/>
</dbReference>
<dbReference type="OrthoDB" id="6108017at2759"/>
<dbReference type="Proteomes" id="UP000186698">
    <property type="component" value="Chromosome 8L"/>
</dbReference>
<dbReference type="GO" id="GO:0005923">
    <property type="term" value="C:bicellular tight junction"/>
    <property type="evidence" value="ECO:0000318"/>
    <property type="project" value="GO_Central"/>
</dbReference>
<dbReference type="GO" id="GO:0016459">
    <property type="term" value="C:myosin complex"/>
    <property type="evidence" value="ECO:0007669"/>
    <property type="project" value="InterPro"/>
</dbReference>
<dbReference type="GO" id="GO:0003779">
    <property type="term" value="F:actin binding"/>
    <property type="evidence" value="ECO:0000314"/>
    <property type="project" value="UniProtKB"/>
</dbReference>
<dbReference type="GO" id="GO:0008017">
    <property type="term" value="F:microtubule binding"/>
    <property type="evidence" value="ECO:0000318"/>
    <property type="project" value="GO_Central"/>
</dbReference>
<dbReference type="GO" id="GO:0000226">
    <property type="term" value="P:microtubule cytoskeleton organization"/>
    <property type="evidence" value="ECO:0000318"/>
    <property type="project" value="GO_Central"/>
</dbReference>
<dbReference type="FunFam" id="1.10.287.1490:FF:000049">
    <property type="entry name" value="Cingulin"/>
    <property type="match status" value="1"/>
</dbReference>
<dbReference type="Gene3D" id="1.10.287.1490">
    <property type="match status" value="1"/>
</dbReference>
<dbReference type="InterPro" id="IPR002928">
    <property type="entry name" value="Myosin_tail"/>
</dbReference>
<dbReference type="PANTHER" id="PTHR46349">
    <property type="entry name" value="CINGULIN-LIKE PROTEIN 1-RELATED"/>
    <property type="match status" value="1"/>
</dbReference>
<dbReference type="PANTHER" id="PTHR46349:SF6">
    <property type="entry name" value="MYOSIN-6-LIKE"/>
    <property type="match status" value="1"/>
</dbReference>
<dbReference type="Pfam" id="PF01576">
    <property type="entry name" value="Myosin_tail_1"/>
    <property type="match status" value="1"/>
</dbReference>
<gene>
    <name evidence="2" type="primary">cgn</name>
</gene>
<feature type="chain" id="PRO_0000089765" description="Cingulin">
    <location>
        <begin position="1"/>
        <end position="1368"/>
    </location>
</feature>
<feature type="region of interest" description="Head">
    <location>
        <begin position="9"/>
        <end position="435"/>
    </location>
</feature>
<feature type="region of interest" description="Interaction with TJP3/ZO3 and myosin">
    <location>
        <begin position="9"/>
        <end position="378"/>
    </location>
</feature>
<feature type="region of interest" description="Disordered" evidence="4">
    <location>
        <begin position="71"/>
        <end position="264"/>
    </location>
</feature>
<feature type="region of interest" description="Interaction with F-actin">
    <location>
        <begin position="101"/>
        <end position="294"/>
    </location>
</feature>
<feature type="region of interest" description="Interaction with TJP2/ZO2">
    <location>
        <begin position="150"/>
        <end position="295"/>
    </location>
</feature>
<feature type="region of interest" description="Disordered" evidence="4">
    <location>
        <begin position="278"/>
        <end position="312"/>
    </location>
</feature>
<feature type="region of interest" description="Interaction with myosin">
    <location>
        <begin position="377"/>
        <end position="1368"/>
    </location>
</feature>
<feature type="region of interest" description="Disordered" evidence="4">
    <location>
        <begin position="1053"/>
        <end position="1080"/>
    </location>
</feature>
<feature type="region of interest" description="Disordered" evidence="4">
    <location>
        <begin position="1163"/>
        <end position="1183"/>
    </location>
</feature>
<feature type="region of interest" description="Disordered" evidence="4">
    <location>
        <begin position="1308"/>
        <end position="1368"/>
    </location>
</feature>
<feature type="region of interest" description="Tail">
    <location>
        <begin position="1331"/>
        <end position="1368"/>
    </location>
</feature>
<feature type="coiled-coil region" evidence="3">
    <location>
        <begin position="436"/>
        <end position="1330"/>
    </location>
</feature>
<feature type="short sequence motif" description="ZIM">
    <location>
        <begin position="41"/>
        <end position="55"/>
    </location>
</feature>
<feature type="compositionally biased region" description="Polar residues" evidence="4">
    <location>
        <begin position="83"/>
        <end position="97"/>
    </location>
</feature>
<feature type="compositionally biased region" description="Low complexity" evidence="4">
    <location>
        <begin position="116"/>
        <end position="132"/>
    </location>
</feature>
<feature type="compositionally biased region" description="Low complexity" evidence="4">
    <location>
        <begin position="200"/>
        <end position="211"/>
    </location>
</feature>
<feature type="compositionally biased region" description="Polar residues" evidence="4">
    <location>
        <begin position="228"/>
        <end position="256"/>
    </location>
</feature>
<feature type="compositionally biased region" description="Basic and acidic residues" evidence="4">
    <location>
        <begin position="290"/>
        <end position="312"/>
    </location>
</feature>
<feature type="compositionally biased region" description="Basic and acidic residues" evidence="4">
    <location>
        <begin position="1320"/>
        <end position="1338"/>
    </location>
</feature>
<feature type="compositionally biased region" description="Polar residues" evidence="4">
    <location>
        <begin position="1352"/>
        <end position="1368"/>
    </location>
</feature>
<feature type="splice variant" id="VSP_037042" description="In isoform 2." evidence="10">
    <location>
        <begin position="563"/>
        <end position="633"/>
    </location>
</feature>
<feature type="sequence conflict" description="In Ref. 2; AAH91650." evidence="11" ref="2">
    <original>S</original>
    <variation>N</variation>
    <location>
        <position position="395"/>
    </location>
</feature>
<feature type="sequence conflict" description="In Ref. 2; AAH91650." evidence="11" ref="2">
    <original>H</original>
    <variation>Q</variation>
    <location>
        <position position="791"/>
    </location>
</feature>
<organism>
    <name type="scientific">Xenopus laevis</name>
    <name type="common">African clawed frog</name>
    <dbReference type="NCBI Taxonomy" id="8355"/>
    <lineage>
        <taxon>Eukaryota</taxon>
        <taxon>Metazoa</taxon>
        <taxon>Chordata</taxon>
        <taxon>Craniata</taxon>
        <taxon>Vertebrata</taxon>
        <taxon>Euteleostomi</taxon>
        <taxon>Amphibia</taxon>
        <taxon>Batrachia</taxon>
        <taxon>Anura</taxon>
        <taxon>Pipoidea</taxon>
        <taxon>Pipidae</taxon>
        <taxon>Xenopodinae</taxon>
        <taxon>Xenopus</taxon>
        <taxon>Xenopus</taxon>
    </lineage>
</organism>
<reference key="1">
    <citation type="journal article" date="1999" name="J. Cell Biol.">
        <title>Cingulin contains globular and coiled-coil domains and interacts with ZO-1, ZO-2, ZO-3 and myosin.</title>
        <authorList>
            <person name="Cordenonsi M."/>
            <person name="D'Atri F."/>
            <person name="Hammar E."/>
            <person name="Parry D.A.D."/>
            <person name="Kenrick-Jones J."/>
            <person name="Shore D."/>
            <person name="Citi S."/>
        </authorList>
    </citation>
    <scope>NUCLEOTIDE SEQUENCE [MRNA] (ISOFORM 1)</scope>
    <scope>SUBUNIT</scope>
    <scope>INTERACTION WITH TJP1; TJP2; TJP3 AND MYOSIN</scope>
    <source>
        <tissue>Oocyte</tissue>
    </source>
</reference>
<reference key="2">
    <citation type="submission" date="2005-03" db="EMBL/GenBank/DDBJ databases">
        <authorList>
            <consortium name="NIH - Xenopus Gene Collection (XGC) project"/>
        </authorList>
    </citation>
    <scope>NUCLEOTIDE SEQUENCE [LARGE SCALE MRNA] (ISOFORM 2)</scope>
    <source>
        <tissue>Lung</tissue>
    </source>
</reference>
<reference key="3">
    <citation type="journal article" date="1996" name="Dev. Dyn.">
        <title>Tight junctions in early amphibian development: detection of junctional cingulin from the 2-cell stage and its localization at the boundary of distinct membrane domains in dividing blastomeres in low calcium.</title>
        <authorList>
            <person name="Cardellini P."/>
            <person name="Davanzo G."/>
            <person name="Citi S."/>
        </authorList>
    </citation>
    <scope>FUNCTION IN TIGHT JUNCTION BIOGENESIS</scope>
</reference>
<reference key="4">
    <citation type="journal article" date="2000" name="Mech. Dev.">
        <title>Tight junction biogenesis in the early Xenopus embryo.</title>
        <authorList>
            <person name="Fesenko I."/>
            <person name="Kurth T."/>
            <person name="Sheth B."/>
            <person name="Fleming T.P."/>
            <person name="Citi S."/>
            <person name="Hausen P."/>
        </authorList>
    </citation>
    <scope>FUNCTION IN TIGHT JUNCTION BIOGENESIS</scope>
</reference>
<reference key="5">
    <citation type="journal article" date="1999" name="Eur. J. Biochem.">
        <title>Xenopus laevis occludin. Identification of in vitro phosphorylation sites by protein kinase CK2 and association with cingulin.</title>
        <authorList>
            <person name="Cordenonsi M."/>
            <person name="Turco F."/>
            <person name="D'Atri F."/>
            <person name="Hammar E."/>
            <person name="Martinucci G."/>
            <person name="Meggio F."/>
            <person name="Citi S."/>
        </authorList>
    </citation>
    <scope>INTERACTION WITH OCLN</scope>
</reference>
<reference key="6">
    <citation type="journal article" date="2001" name="FEBS Lett.">
        <title>Cingulin interacts with F-actin in vitro.</title>
        <authorList>
            <person name="D'Atri F."/>
            <person name="Citi S."/>
        </authorList>
    </citation>
    <scope>INTERACTION WITH F-ACTIN</scope>
</reference>
<reference key="7">
    <citation type="journal article" date="2002" name="J. Biol. Chem.">
        <title>Evidence for a functional interaction between cingulin and ZO-1 in cultured cells.</title>
        <authorList>
            <person name="D'Atri F."/>
            <person name="Nadalutti F."/>
            <person name="Citi S."/>
        </authorList>
    </citation>
    <scope>INTERACTION WITH TJP1</scope>
</reference>
<accession>Q9PTD7</accession>
<accession>Q5BJ25</accession>